<evidence type="ECO:0000255" key="1"/>
<evidence type="ECO:0000255" key="2">
    <source>
        <dbReference type="PROSITE-ProRule" id="PRU00521"/>
    </source>
</evidence>
<evidence type="ECO:0000305" key="3"/>
<evidence type="ECO:0000312" key="4">
    <source>
        <dbReference type="MGI" id="MGI:2177528"/>
    </source>
</evidence>
<accession>Q60882</accession>
<accession>Q9EQB0</accession>
<feature type="chain" id="PRO_0000150822" description="Olfactory receptor 8B8">
    <location>
        <begin position="1"/>
        <end position="310"/>
    </location>
</feature>
<feature type="topological domain" description="Extracellular" evidence="1">
    <location>
        <begin position="1"/>
        <end position="27"/>
    </location>
</feature>
<feature type="transmembrane region" description="Helical; Name=1" evidence="1">
    <location>
        <begin position="28"/>
        <end position="48"/>
    </location>
</feature>
<feature type="topological domain" description="Cytoplasmic" evidence="1">
    <location>
        <begin position="49"/>
        <end position="55"/>
    </location>
</feature>
<feature type="transmembrane region" description="Helical; Name=2" evidence="1">
    <location>
        <begin position="56"/>
        <end position="76"/>
    </location>
</feature>
<feature type="topological domain" description="Extracellular" evidence="1">
    <location>
        <begin position="77"/>
        <end position="98"/>
    </location>
</feature>
<feature type="transmembrane region" description="Helical; Name=3" evidence="1">
    <location>
        <begin position="99"/>
        <end position="119"/>
    </location>
</feature>
<feature type="topological domain" description="Cytoplasmic" evidence="1">
    <location>
        <begin position="120"/>
        <end position="140"/>
    </location>
</feature>
<feature type="transmembrane region" description="Helical; Name=4" evidence="1">
    <location>
        <begin position="141"/>
        <end position="161"/>
    </location>
</feature>
<feature type="topological domain" description="Extracellular" evidence="1">
    <location>
        <begin position="162"/>
        <end position="195"/>
    </location>
</feature>
<feature type="transmembrane region" description="Helical; Name=5" evidence="1">
    <location>
        <begin position="196"/>
        <end position="216"/>
    </location>
</feature>
<feature type="topological domain" description="Cytoplasmic" evidence="1">
    <location>
        <begin position="217"/>
        <end position="238"/>
    </location>
</feature>
<feature type="transmembrane region" description="Helical; Name=6" evidence="1">
    <location>
        <begin position="239"/>
        <end position="259"/>
    </location>
</feature>
<feature type="topological domain" description="Extracellular" evidence="1">
    <location>
        <begin position="260"/>
        <end position="270"/>
    </location>
</feature>
<feature type="transmembrane region" description="Helical; Name=7" evidence="1">
    <location>
        <begin position="271"/>
        <end position="291"/>
    </location>
</feature>
<feature type="topological domain" description="Cytoplasmic" evidence="1">
    <location>
        <begin position="292"/>
        <end position="310"/>
    </location>
</feature>
<feature type="glycosylation site" description="N-linked (GlcNAc...) asparagine" evidence="1">
    <location>
        <position position="5"/>
    </location>
</feature>
<feature type="disulfide bond" evidence="2">
    <location>
        <begin position="96"/>
        <end position="188"/>
    </location>
</feature>
<reference key="1">
    <citation type="journal article" date="2000" name="Mamm. Genome">
        <title>Characterization of a cluster comprising 100 odorant receptor genes in mouse.</title>
        <authorList>
            <person name="Xie S.Y."/>
            <person name="Feinstein P."/>
            <person name="Mombaerts P."/>
        </authorList>
    </citation>
    <scope>NUCLEOTIDE SEQUENCE [GENOMIC DNA]</scope>
    <source>
        <strain>129/SvJ</strain>
    </source>
</reference>
<reference key="2">
    <citation type="journal article" date="2002" name="Nat. Neurosci.">
        <title>The olfactory receptor gene superfamily of the mouse.</title>
        <authorList>
            <person name="Zhang X."/>
            <person name="Firestein S."/>
        </authorList>
    </citation>
    <scope>NUCLEOTIDE SEQUENCE [GENOMIC DNA]</scope>
</reference>
<reference key="3">
    <citation type="journal article" date="2002" name="Hum. Mol. Genet.">
        <title>Different evolutionary processes shaped the mouse and human olfactory receptor gene families.</title>
        <authorList>
            <person name="Young J.M."/>
            <person name="Friedman C."/>
            <person name="Williams E.M."/>
            <person name="Ross J.A."/>
            <person name="Tonnes-Priddy L."/>
            <person name="Trask B.J."/>
        </authorList>
    </citation>
    <scope>NUCLEOTIDE SEQUENCE [GENOMIC DNA]</scope>
</reference>
<reference key="4">
    <citation type="journal article" date="2002" name="Hum. Mol. Genet.">
        <authorList>
            <person name="Young J.M."/>
            <person name="Friedman C."/>
            <person name="Williams E.M."/>
            <person name="Ross J.A."/>
            <person name="Tonnes-Priddy L."/>
            <person name="Trask B.J."/>
        </authorList>
    </citation>
    <scope>ERRATUM OF PUBMED:11875048</scope>
</reference>
<reference key="5">
    <citation type="journal article" date="1996" name="Proc. Natl. Acad. Sci. U.S.A.">
        <title>The chromosomal distribution of mouse odorant receptor genes.</title>
        <authorList>
            <person name="Sullivan S.L."/>
            <person name="Adamson M.C."/>
            <person name="Ressler K.J."/>
            <person name="Kozak C.A."/>
            <person name="Buck L.B."/>
        </authorList>
    </citation>
    <scope>NUCLEOTIDE SEQUENCE [GENOMIC DNA] OF 127-238</scope>
    <source>
        <strain>C57BL/6J</strain>
    </source>
</reference>
<comment type="function">
    <text evidence="3">Odorant receptor.</text>
</comment>
<comment type="subcellular location">
    <subcellularLocation>
        <location evidence="3">Cell membrane</location>
        <topology evidence="1">Multi-pass membrane protein</topology>
    </subcellularLocation>
</comment>
<comment type="similarity">
    <text evidence="2">Belongs to the G-protein coupled receptor 1 family.</text>
</comment>
<gene>
    <name evidence="4" type="primary">Or8b8</name>
    <name evidence="4" type="synonym">Mor161-6</name>
    <name evidence="4" type="synonym">Olfr145</name>
    <name type="synonym">Olfr7</name>
</gene>
<sequence length="310" mass="34451">MATENASVPEFILAGLTDQPGLRMPLFFLFLGFYMVTMVGNLGLITLIGLNSHLHTPMYFFLFNLSLIDFCYSTVITPKMLVSFVSKKNIISYSGCMTQLFFFLFFVVSESFILSAMAYDRYVAICNPLMYTVTMSPQVCLLLLLGVYVMGFAGAMAHTAFMVKLTFCADKLVNHYMCDILPLLERSCTSTYVNELVVFIVVGIDIGVPTVTIFISYALILSSILRISSTEGRSKAFSTCSSHIIAVSLFFGSGAFMYLKPSSLLPMNQGKVSSLFYTIVVPMLNPLIYSLRNKDVKVALRKTLSRSSFS</sequence>
<dbReference type="EMBL" id="AF282279">
    <property type="protein sequence ID" value="AAG39864.1"/>
    <property type="molecule type" value="Genomic_DNA"/>
</dbReference>
<dbReference type="EMBL" id="AY073780">
    <property type="protein sequence ID" value="AAL61443.1"/>
    <property type="molecule type" value="Genomic_DNA"/>
</dbReference>
<dbReference type="EMBL" id="AY318060">
    <property type="protein sequence ID" value="AAP71357.1"/>
    <property type="molecule type" value="Genomic_DNA"/>
</dbReference>
<dbReference type="EMBL" id="U28771">
    <property type="protein sequence ID" value="AAC52394.1"/>
    <property type="molecule type" value="Genomic_DNA"/>
</dbReference>
<dbReference type="CCDS" id="CCDS22990.1"/>
<dbReference type="RefSeq" id="NP_666425.1">
    <property type="nucleotide sequence ID" value="NM_146313.1"/>
</dbReference>
<dbReference type="SMR" id="Q60882"/>
<dbReference type="FunCoup" id="Q60882">
    <property type="interactions" value="1206"/>
</dbReference>
<dbReference type="STRING" id="10090.ENSMUSP00000083229"/>
<dbReference type="BindingDB" id="Q60882"/>
<dbReference type="GlyCosmos" id="Q60882">
    <property type="glycosylation" value="1 site, No reported glycans"/>
</dbReference>
<dbReference type="GlyGen" id="Q60882">
    <property type="glycosylation" value="1 site"/>
</dbReference>
<dbReference type="PaxDb" id="10090-ENSMUSP00000083229"/>
<dbReference type="Antibodypedia" id="53986">
    <property type="antibodies" value="68 antibodies from 19 providers"/>
</dbReference>
<dbReference type="DNASU" id="258310"/>
<dbReference type="Ensembl" id="ENSMUST00000086062.4">
    <property type="protein sequence ID" value="ENSMUSP00000083229.3"/>
    <property type="gene ID" value="ENSMUSG00000066748.5"/>
</dbReference>
<dbReference type="Ensembl" id="ENSMUST00000213688.2">
    <property type="protein sequence ID" value="ENSMUSP00000150284.2"/>
    <property type="gene ID" value="ENSMUSG00000066748.5"/>
</dbReference>
<dbReference type="GeneID" id="258310"/>
<dbReference type="KEGG" id="mmu:258310"/>
<dbReference type="UCSC" id="uc009ovp.1">
    <property type="organism name" value="mouse"/>
</dbReference>
<dbReference type="AGR" id="MGI:2177528"/>
<dbReference type="CTD" id="26493"/>
<dbReference type="MGI" id="MGI:2177528">
    <property type="gene designation" value="Or8b8"/>
</dbReference>
<dbReference type="VEuPathDB" id="HostDB:ENSMUSG00000066748"/>
<dbReference type="eggNOG" id="ENOG502QVH7">
    <property type="taxonomic scope" value="Eukaryota"/>
</dbReference>
<dbReference type="GeneTree" id="ENSGT01010000222320"/>
<dbReference type="HOGENOM" id="CLU_012526_1_0_1"/>
<dbReference type="InParanoid" id="Q60882"/>
<dbReference type="OMA" id="CNPLVYM"/>
<dbReference type="OrthoDB" id="9615611at2759"/>
<dbReference type="PhylomeDB" id="Q60882"/>
<dbReference type="TreeFam" id="TF352753"/>
<dbReference type="BioGRID-ORCS" id="258310">
    <property type="hits" value="1 hit in 70 CRISPR screens"/>
</dbReference>
<dbReference type="ChiTaRS" id="Olfr145">
    <property type="organism name" value="mouse"/>
</dbReference>
<dbReference type="PRO" id="PR:Q60882"/>
<dbReference type="Proteomes" id="UP000000589">
    <property type="component" value="Chromosome 9"/>
</dbReference>
<dbReference type="RNAct" id="Q60882">
    <property type="molecule type" value="protein"/>
</dbReference>
<dbReference type="Bgee" id="ENSMUSG00000066748">
    <property type="expression patterns" value="Expressed in epithelium and 12 other cell types or tissues"/>
</dbReference>
<dbReference type="ExpressionAtlas" id="Q60882">
    <property type="expression patterns" value="differential"/>
</dbReference>
<dbReference type="GO" id="GO:0016020">
    <property type="term" value="C:membrane"/>
    <property type="evidence" value="ECO:0000247"/>
    <property type="project" value="MGI"/>
</dbReference>
<dbReference type="GO" id="GO:0005886">
    <property type="term" value="C:plasma membrane"/>
    <property type="evidence" value="ECO:0007669"/>
    <property type="project" value="UniProtKB-SubCell"/>
</dbReference>
<dbReference type="GO" id="GO:0004930">
    <property type="term" value="F:G protein-coupled receptor activity"/>
    <property type="evidence" value="ECO:0007669"/>
    <property type="project" value="UniProtKB-KW"/>
</dbReference>
<dbReference type="GO" id="GO:0004984">
    <property type="term" value="F:olfactory receptor activity"/>
    <property type="evidence" value="ECO:0000247"/>
    <property type="project" value="MGI"/>
</dbReference>
<dbReference type="GO" id="GO:0007186">
    <property type="term" value="P:G protein-coupled receptor signaling pathway"/>
    <property type="evidence" value="ECO:0000247"/>
    <property type="project" value="MGI"/>
</dbReference>
<dbReference type="GO" id="GO:0007608">
    <property type="term" value="P:sensory perception of smell"/>
    <property type="evidence" value="ECO:0000247"/>
    <property type="project" value="MGI"/>
</dbReference>
<dbReference type="CDD" id="cd15405">
    <property type="entry name" value="7tmA_OR8B-like"/>
    <property type="match status" value="1"/>
</dbReference>
<dbReference type="FunFam" id="1.20.1070.10:FF:000646">
    <property type="entry name" value="Olfactory receptor 887"/>
    <property type="match status" value="1"/>
</dbReference>
<dbReference type="FunFam" id="1.20.1070.10:FF:001035">
    <property type="entry name" value="Putative olfactory receptor"/>
    <property type="match status" value="1"/>
</dbReference>
<dbReference type="Gene3D" id="1.20.1070.10">
    <property type="entry name" value="Rhodopsin 7-helix transmembrane proteins"/>
    <property type="match status" value="1"/>
</dbReference>
<dbReference type="InterPro" id="IPR000276">
    <property type="entry name" value="GPCR_Rhodpsn"/>
</dbReference>
<dbReference type="InterPro" id="IPR017452">
    <property type="entry name" value="GPCR_Rhodpsn_7TM"/>
</dbReference>
<dbReference type="InterPro" id="IPR000725">
    <property type="entry name" value="Olfact_rcpt"/>
</dbReference>
<dbReference type="PANTHER" id="PTHR48018">
    <property type="entry name" value="OLFACTORY RECEPTOR"/>
    <property type="match status" value="1"/>
</dbReference>
<dbReference type="Pfam" id="PF13853">
    <property type="entry name" value="7tm_4"/>
    <property type="match status" value="1"/>
</dbReference>
<dbReference type="PRINTS" id="PR00237">
    <property type="entry name" value="GPCRRHODOPSN"/>
</dbReference>
<dbReference type="PRINTS" id="PR00245">
    <property type="entry name" value="OLFACTORYR"/>
</dbReference>
<dbReference type="SUPFAM" id="SSF81321">
    <property type="entry name" value="Family A G protein-coupled receptor-like"/>
    <property type="match status" value="1"/>
</dbReference>
<dbReference type="PROSITE" id="PS00237">
    <property type="entry name" value="G_PROTEIN_RECEP_F1_1"/>
    <property type="match status" value="1"/>
</dbReference>
<dbReference type="PROSITE" id="PS50262">
    <property type="entry name" value="G_PROTEIN_RECEP_F1_2"/>
    <property type="match status" value="1"/>
</dbReference>
<protein>
    <recommendedName>
        <fullName evidence="3">Olfactory receptor 8B8</fullName>
    </recommendedName>
    <alternativeName>
        <fullName>Odorant receptor K21</fullName>
    </alternativeName>
    <alternativeName>
        <fullName>Olfactory receptor 145</fullName>
    </alternativeName>
    <alternativeName>
        <fullName>Olfactory receptor 161-6</fullName>
    </alternativeName>
    <alternativeName>
        <fullName>Olfactory receptor 7C</fullName>
    </alternativeName>
</protein>
<name>OR8B8_MOUSE</name>
<proteinExistence type="inferred from homology"/>
<organism>
    <name type="scientific">Mus musculus</name>
    <name type="common">Mouse</name>
    <dbReference type="NCBI Taxonomy" id="10090"/>
    <lineage>
        <taxon>Eukaryota</taxon>
        <taxon>Metazoa</taxon>
        <taxon>Chordata</taxon>
        <taxon>Craniata</taxon>
        <taxon>Vertebrata</taxon>
        <taxon>Euteleostomi</taxon>
        <taxon>Mammalia</taxon>
        <taxon>Eutheria</taxon>
        <taxon>Euarchontoglires</taxon>
        <taxon>Glires</taxon>
        <taxon>Rodentia</taxon>
        <taxon>Myomorpha</taxon>
        <taxon>Muroidea</taxon>
        <taxon>Muridae</taxon>
        <taxon>Murinae</taxon>
        <taxon>Mus</taxon>
        <taxon>Mus</taxon>
    </lineage>
</organism>
<keyword id="KW-1003">Cell membrane</keyword>
<keyword id="KW-1015">Disulfide bond</keyword>
<keyword id="KW-0297">G-protein coupled receptor</keyword>
<keyword id="KW-0325">Glycoprotein</keyword>
<keyword id="KW-0472">Membrane</keyword>
<keyword id="KW-0552">Olfaction</keyword>
<keyword id="KW-0675">Receptor</keyword>
<keyword id="KW-1185">Reference proteome</keyword>
<keyword id="KW-0716">Sensory transduction</keyword>
<keyword id="KW-0807">Transducer</keyword>
<keyword id="KW-0812">Transmembrane</keyword>
<keyword id="KW-1133">Transmembrane helix</keyword>